<gene>
    <name type="primary">NV</name>
</gene>
<organismHost>
    <name type="scientific">Salmo</name>
    <dbReference type="NCBI Taxonomy" id="8028"/>
</organismHost>
<comment type="function">
    <text>Plays an essential role for the viral pathogenicity.</text>
</comment>
<comment type="similarity">
    <text evidence="1">Belongs to the novirhabdovirus NV protein family.</text>
</comment>
<reference key="1">
    <citation type="journal article" date="1997" name="J. Gen. Virol.">
        <title>Distribution and variation of NV genes in fish rhabdoviruses.</title>
        <authorList>
            <person name="Kurath G."/>
            <person name="Higman K.H."/>
            <person name="Bjorklund H.V."/>
        </authorList>
    </citation>
    <scope>NUCLEOTIDE SEQUENCE [GENOMIC RNA]</scope>
</reference>
<accession>Q82708</accession>
<feature type="chain" id="PRO_0000282904" description="Non-virion protein">
    <location>
        <begin position="1"/>
        <end position="111"/>
    </location>
</feature>
<dbReference type="EMBL" id="U47846">
    <property type="protein sequence ID" value="AAC56574.1"/>
    <property type="molecule type" value="Genomic_RNA"/>
</dbReference>
<dbReference type="InterPro" id="IPR003490">
    <property type="entry name" value="Rhabd_NV"/>
</dbReference>
<dbReference type="Pfam" id="PF02484">
    <property type="entry name" value="Rhabdo_NV"/>
    <property type="match status" value="1"/>
</dbReference>
<proteinExistence type="inferred from homology"/>
<organism>
    <name type="scientific">Infectious hematopoietic necrosis virus (strain Round Butte)</name>
    <name type="common">IHNV</name>
    <dbReference type="NCBI Taxonomy" id="11291"/>
    <lineage>
        <taxon>Viruses</taxon>
        <taxon>Riboviria</taxon>
        <taxon>Orthornavirae</taxon>
        <taxon>Negarnaviricota</taxon>
        <taxon>Haploviricotina</taxon>
        <taxon>Monjiviricetes</taxon>
        <taxon>Mononegavirales</taxon>
        <taxon>Rhabdoviridae</taxon>
        <taxon>Gammarhabdovirinae</taxon>
        <taxon>Novirhabdovirus</taxon>
        <taxon>Novirhabdovirus salmonid</taxon>
    </lineage>
</organism>
<sequence>MDHRDTNTNMEALREVLRYKNEVAGHGFLFDDGDLVWREEDDATWRRLYDVVNALISSKRMQRVLYMDLSITKGEGHLLFVDLQGTKNRLYKEPRFRRHLILIEDFLAYPR</sequence>
<name>NV_IHNVR</name>
<protein>
    <recommendedName>
        <fullName>Non-virion protein</fullName>
    </recommendedName>
</protein>
<evidence type="ECO:0000305" key="1"/>